<sequence>MVAQLYHHLTILIASIYIIFFVNAAPTLYEDDEEDFNSTEYDVFLDSDSFQFPRRNSSCNCTREEATRTLLEALKRALQIIAGYINETDTEELPTYPPTMTTPLETTPLDTSPPVLPSAIP</sequence>
<dbReference type="EMBL" id="AF005370">
    <property type="protein sequence ID" value="AAC58055.1"/>
    <property type="molecule type" value="Genomic_DNA"/>
</dbReference>
<dbReference type="PIR" id="T03103">
    <property type="entry name" value="T03103"/>
</dbReference>
<dbReference type="RefSeq" id="NP_065507.1">
    <property type="nucleotide sequence ID" value="NC_002531.1"/>
</dbReference>
<dbReference type="KEGG" id="vg:911791"/>
<dbReference type="Proteomes" id="UP000000941">
    <property type="component" value="Segment"/>
</dbReference>
<dbReference type="GO" id="GO:0033644">
    <property type="term" value="C:host cell membrane"/>
    <property type="evidence" value="ECO:0007669"/>
    <property type="project" value="UniProtKB-SubCell"/>
</dbReference>
<dbReference type="GO" id="GO:0016020">
    <property type="term" value="C:membrane"/>
    <property type="evidence" value="ECO:0007669"/>
    <property type="project" value="UniProtKB-KW"/>
</dbReference>
<organism>
    <name type="scientific">Alcelaphine herpesvirus 1 (strain C500)</name>
    <name type="common">AlHV-1</name>
    <name type="synonym">Malignant catarrhal fever virus</name>
    <dbReference type="NCBI Taxonomy" id="654901"/>
    <lineage>
        <taxon>Viruses</taxon>
        <taxon>Duplodnaviria</taxon>
        <taxon>Heunggongvirae</taxon>
        <taxon>Peploviricota</taxon>
        <taxon>Herviviricetes</taxon>
        <taxon>Herpesvirales</taxon>
        <taxon>Orthoherpesviridae</taxon>
        <taxon>Gammaherpesvirinae</taxon>
        <taxon>Macavirus</taxon>
        <taxon>Macavirus alcelaphinegamma1</taxon>
    </lineage>
</organism>
<evidence type="ECO:0000255" key="1"/>
<evidence type="ECO:0000256" key="2">
    <source>
        <dbReference type="SAM" id="MobiDB-lite"/>
    </source>
</evidence>
<evidence type="ECO:0000305" key="3"/>
<reference key="1">
    <citation type="journal article" date="1997" name="J. Virol.">
        <title>Primary structure of the alcelaphine herpesvirus 1 genome.</title>
        <authorList>
            <person name="Ensser A."/>
            <person name="Pflanz R."/>
            <person name="Fleckenstein B."/>
        </authorList>
    </citation>
    <scope>NUCLEOTIDE SEQUENCE [LARGE SCALE GENOMIC DNA]</scope>
</reference>
<gene>
    <name type="primary">A4</name>
</gene>
<name>VGA4_ALHV1</name>
<proteinExistence type="predicted"/>
<accession>O36359</accession>
<organismHost>
    <name type="scientific">Connochaetes taurinus</name>
    <name type="common">Blue wildebeest</name>
    <dbReference type="NCBI Taxonomy" id="9927"/>
</organismHost>
<comment type="subcellular location">
    <subcellularLocation>
        <location evidence="3">Host membrane</location>
        <topology evidence="3">Single-pass membrane protein</topology>
    </subcellularLocation>
</comment>
<feature type="chain" id="PRO_0000405725" description="Uncharacterized gene A4 protein">
    <location>
        <begin position="1"/>
        <end position="121"/>
    </location>
</feature>
<feature type="transmembrane region" description="Helical" evidence="1">
    <location>
        <begin position="9"/>
        <end position="29"/>
    </location>
</feature>
<feature type="region of interest" description="Disordered" evidence="2">
    <location>
        <begin position="91"/>
        <end position="121"/>
    </location>
</feature>
<feature type="compositionally biased region" description="Low complexity" evidence="2">
    <location>
        <begin position="98"/>
        <end position="113"/>
    </location>
</feature>
<keyword id="KW-1043">Host membrane</keyword>
<keyword id="KW-0472">Membrane</keyword>
<keyword id="KW-1185">Reference proteome</keyword>
<keyword id="KW-0812">Transmembrane</keyword>
<keyword id="KW-1133">Transmembrane helix</keyword>
<protein>
    <recommendedName>
        <fullName>Uncharacterized gene A4 protein</fullName>
    </recommendedName>
</protein>